<keyword id="KW-0963">Cytoplasm</keyword>
<keyword id="KW-0413">Isomerase</keyword>
<keyword id="KW-0464">Manganese</keyword>
<keyword id="KW-0479">Metal-binding</keyword>
<keyword id="KW-1185">Reference proteome</keyword>
<keyword id="KW-0684">Rhamnose metabolism</keyword>
<dbReference type="EC" id="5.3.1.14" evidence="1"/>
<dbReference type="EMBL" id="CP000800">
    <property type="protein sequence ID" value="ABV16479.1"/>
    <property type="molecule type" value="Genomic_DNA"/>
</dbReference>
<dbReference type="RefSeq" id="WP_001307492.1">
    <property type="nucleotide sequence ID" value="NC_009801.1"/>
</dbReference>
<dbReference type="SMR" id="A7ZUB4"/>
<dbReference type="KEGG" id="ecw:EcE24377A_4434"/>
<dbReference type="HOGENOM" id="CLU_052790_0_0_6"/>
<dbReference type="UniPathway" id="UPA00541">
    <property type="reaction ID" value="UER00601"/>
</dbReference>
<dbReference type="Proteomes" id="UP000001122">
    <property type="component" value="Chromosome"/>
</dbReference>
<dbReference type="GO" id="GO:0005737">
    <property type="term" value="C:cytoplasm"/>
    <property type="evidence" value="ECO:0007669"/>
    <property type="project" value="UniProtKB-SubCell"/>
</dbReference>
<dbReference type="GO" id="GO:0008740">
    <property type="term" value="F:L-rhamnose isomerase activity"/>
    <property type="evidence" value="ECO:0007669"/>
    <property type="project" value="UniProtKB-UniRule"/>
</dbReference>
<dbReference type="GO" id="GO:0030145">
    <property type="term" value="F:manganese ion binding"/>
    <property type="evidence" value="ECO:0007669"/>
    <property type="project" value="UniProtKB-UniRule"/>
</dbReference>
<dbReference type="GO" id="GO:0019324">
    <property type="term" value="P:L-lyxose metabolic process"/>
    <property type="evidence" value="ECO:0007669"/>
    <property type="project" value="TreeGrafter"/>
</dbReference>
<dbReference type="GO" id="GO:0019301">
    <property type="term" value="P:rhamnose catabolic process"/>
    <property type="evidence" value="ECO:0007669"/>
    <property type="project" value="UniProtKB-UniRule"/>
</dbReference>
<dbReference type="FunFam" id="3.20.20.150:FF:000006">
    <property type="entry name" value="L-rhamnose isomerase"/>
    <property type="match status" value="1"/>
</dbReference>
<dbReference type="Gene3D" id="3.20.20.150">
    <property type="entry name" value="Divalent-metal-dependent TIM barrel enzymes"/>
    <property type="match status" value="1"/>
</dbReference>
<dbReference type="HAMAP" id="MF_00541">
    <property type="entry name" value="RhaA"/>
    <property type="match status" value="1"/>
</dbReference>
<dbReference type="InterPro" id="IPR050337">
    <property type="entry name" value="L-rhamnose_isomerase"/>
</dbReference>
<dbReference type="InterPro" id="IPR009308">
    <property type="entry name" value="Rhamnose_isomerase"/>
</dbReference>
<dbReference type="InterPro" id="IPR036237">
    <property type="entry name" value="Xyl_isomerase-like_sf"/>
</dbReference>
<dbReference type="NCBIfam" id="NF002203">
    <property type="entry name" value="PRK01076.1"/>
    <property type="match status" value="1"/>
</dbReference>
<dbReference type="NCBIfam" id="TIGR01748">
    <property type="entry name" value="rhaA"/>
    <property type="match status" value="1"/>
</dbReference>
<dbReference type="PANTHER" id="PTHR30268">
    <property type="entry name" value="L-RHAMNOSE ISOMERASE"/>
    <property type="match status" value="1"/>
</dbReference>
<dbReference type="PANTHER" id="PTHR30268:SF0">
    <property type="entry name" value="L-RHAMNOSE ISOMERASE"/>
    <property type="match status" value="1"/>
</dbReference>
<dbReference type="Pfam" id="PF06134">
    <property type="entry name" value="RhaA"/>
    <property type="match status" value="1"/>
</dbReference>
<dbReference type="SUPFAM" id="SSF51658">
    <property type="entry name" value="Xylose isomerase-like"/>
    <property type="match status" value="1"/>
</dbReference>
<feature type="chain" id="PRO_1000061059" description="L-rhamnose isomerase">
    <location>
        <begin position="1"/>
        <end position="419"/>
    </location>
</feature>
<feature type="binding site" evidence="1">
    <location>
        <position position="262"/>
    </location>
    <ligand>
        <name>Mn(2+)</name>
        <dbReference type="ChEBI" id="CHEBI:29035"/>
    </ligand>
</feature>
<feature type="binding site" evidence="1">
    <location>
        <position position="294"/>
    </location>
    <ligand>
        <name>Mn(2+)</name>
        <dbReference type="ChEBI" id="CHEBI:29035"/>
    </ligand>
</feature>
<feature type="binding site" evidence="1">
    <location>
        <position position="296"/>
    </location>
    <ligand>
        <name>Mn(2+)</name>
        <dbReference type="ChEBI" id="CHEBI:29035"/>
    </ligand>
</feature>
<comment type="function">
    <text evidence="1">Catalyzes the interconversion of L-rhamnose and L-rhamnulose.</text>
</comment>
<comment type="catalytic activity">
    <reaction evidence="1">
        <text>L-rhamnopyranose = L-rhamnulose</text>
        <dbReference type="Rhea" id="RHEA:23160"/>
        <dbReference type="ChEBI" id="CHEBI:17897"/>
        <dbReference type="ChEBI" id="CHEBI:62346"/>
        <dbReference type="EC" id="5.3.1.14"/>
    </reaction>
</comment>
<comment type="cofactor">
    <cofactor evidence="1">
        <name>Mn(2+)</name>
        <dbReference type="ChEBI" id="CHEBI:29035"/>
    </cofactor>
    <text evidence="1">Binds 1 Mn(2+) ion per subunit.</text>
</comment>
<comment type="pathway">
    <text evidence="1">Carbohydrate degradation; L-rhamnose degradation; glycerone phosphate from L-rhamnose: step 1/3.</text>
</comment>
<comment type="subunit">
    <text evidence="1">Homotetramer.</text>
</comment>
<comment type="subcellular location">
    <subcellularLocation>
        <location evidence="1">Cytoplasm</location>
    </subcellularLocation>
</comment>
<comment type="similarity">
    <text evidence="1">Belongs to the rhamnose isomerase family.</text>
</comment>
<reference key="1">
    <citation type="journal article" date="2008" name="J. Bacteriol.">
        <title>The pangenome structure of Escherichia coli: comparative genomic analysis of E. coli commensal and pathogenic isolates.</title>
        <authorList>
            <person name="Rasko D.A."/>
            <person name="Rosovitz M.J."/>
            <person name="Myers G.S.A."/>
            <person name="Mongodin E.F."/>
            <person name="Fricke W.F."/>
            <person name="Gajer P."/>
            <person name="Crabtree J."/>
            <person name="Sebaihia M."/>
            <person name="Thomson N.R."/>
            <person name="Chaudhuri R."/>
            <person name="Henderson I.R."/>
            <person name="Sperandio V."/>
            <person name="Ravel J."/>
        </authorList>
    </citation>
    <scope>NUCLEOTIDE SEQUENCE [LARGE SCALE GENOMIC DNA]</scope>
    <source>
        <strain>E24377A / ETEC</strain>
    </source>
</reference>
<gene>
    <name evidence="1" type="primary">rhaA</name>
    <name type="ordered locus">EcE24377A_4434</name>
</gene>
<proteinExistence type="inferred from homology"/>
<sequence>MTTQLEQAWELAKQRFAAVGIDVEEALRQLDRLPVSMHCWQGDDVSGFENPEGSLTGGIQATGNYPGKARNASELRTDLEQAMRLIPGPKRLNLHAIYLESDTPVSRDQIKPEHFKNWVEWAKANQLGLDFNPSCFSHPLSADGFTLSHADDSIRQFWIDHCKASRRVSAYFGEQLGTPSVMNIWIPDGMKDITVDRLAPRQRLLAALDEVISEKLNPAHHIDAVESKLFGIGAESYTVGSNEFYMGYATSRQTALCLDAGHFHPTEVISDKISAAMLYVPQLLLHVSRPVRWDSDHVVLLDDETQAIASEIVRHDLFDRVHIGLDFFDASINRIAAWVIGTRNMKKALLRALLEPTAELRKLEAAGDYTARLALLEEQKSLSWQAVWEMYCQRHDTPTGSEWLESVRAYEKAILSQRG</sequence>
<evidence type="ECO:0000255" key="1">
    <source>
        <dbReference type="HAMAP-Rule" id="MF_00541"/>
    </source>
</evidence>
<name>RHAA_ECO24</name>
<organism>
    <name type="scientific">Escherichia coli O139:H28 (strain E24377A / ETEC)</name>
    <dbReference type="NCBI Taxonomy" id="331111"/>
    <lineage>
        <taxon>Bacteria</taxon>
        <taxon>Pseudomonadati</taxon>
        <taxon>Pseudomonadota</taxon>
        <taxon>Gammaproteobacteria</taxon>
        <taxon>Enterobacterales</taxon>
        <taxon>Enterobacteriaceae</taxon>
        <taxon>Escherichia</taxon>
    </lineage>
</organism>
<protein>
    <recommendedName>
        <fullName evidence="1">L-rhamnose isomerase</fullName>
        <ecNumber evidence="1">5.3.1.14</ecNumber>
    </recommendedName>
</protein>
<accession>A7ZUB4</accession>